<feature type="chain" id="PRO_0000414534" description="Release factor glutamine methyltransferase">
    <location>
        <begin position="1"/>
        <end position="273"/>
    </location>
</feature>
<feature type="binding site" evidence="1">
    <location>
        <begin position="109"/>
        <end position="113"/>
    </location>
    <ligand>
        <name>S-adenosyl-L-methionine</name>
        <dbReference type="ChEBI" id="CHEBI:59789"/>
    </ligand>
</feature>
<feature type="binding site" evidence="1">
    <location>
        <position position="132"/>
    </location>
    <ligand>
        <name>S-adenosyl-L-methionine</name>
        <dbReference type="ChEBI" id="CHEBI:59789"/>
    </ligand>
</feature>
<feature type="binding site" evidence="1">
    <location>
        <position position="159"/>
    </location>
    <ligand>
        <name>S-adenosyl-L-methionine</name>
        <dbReference type="ChEBI" id="CHEBI:59789"/>
    </ligand>
</feature>
<feature type="binding site" evidence="1">
    <location>
        <begin position="176"/>
        <end position="179"/>
    </location>
    <ligand>
        <name>substrate</name>
    </ligand>
</feature>
<feature type="binding site" evidence="1">
    <location>
        <position position="176"/>
    </location>
    <ligand>
        <name>S-adenosyl-L-methionine</name>
        <dbReference type="ChEBI" id="CHEBI:59789"/>
    </ligand>
</feature>
<reference key="1">
    <citation type="submission" date="2003-03" db="EMBL/GenBank/DDBJ databases">
        <title>The complete genome sequence of Neisseria gonorrhoeae.</title>
        <authorList>
            <person name="Lewis L.A."/>
            <person name="Gillaspy A.F."/>
            <person name="McLaughlin R.E."/>
            <person name="Gipson M."/>
            <person name="Ducey T.F."/>
            <person name="Ownbey T."/>
            <person name="Hartman K."/>
            <person name="Nydick C."/>
            <person name="Carson M.B."/>
            <person name="Vaughn J."/>
            <person name="Thomson C."/>
            <person name="Song L."/>
            <person name="Lin S."/>
            <person name="Yuan X."/>
            <person name="Najar F."/>
            <person name="Zhan M."/>
            <person name="Ren Q."/>
            <person name="Zhu H."/>
            <person name="Qi S."/>
            <person name="Kenton S.M."/>
            <person name="Lai H."/>
            <person name="White J.D."/>
            <person name="Clifton S."/>
            <person name="Roe B.A."/>
            <person name="Dyer D.W."/>
        </authorList>
    </citation>
    <scope>NUCLEOTIDE SEQUENCE [LARGE SCALE GENOMIC DNA]</scope>
    <source>
        <strain>ATCC 700825 / FA 1090</strain>
    </source>
</reference>
<evidence type="ECO:0000255" key="1">
    <source>
        <dbReference type="HAMAP-Rule" id="MF_02126"/>
    </source>
</evidence>
<proteinExistence type="inferred from homology"/>
<sequence>MTFDEWLGLSKLPKIEARMLLQYVSEYTRVQLLTRGGEEMPDEIRQRADRLAQRRLNGEPVAYILGVREFYGRRFTVNPNVLIPRPETEHLVEAVLARLPENGRVWDLGTGSGAVAVTVALERPDAFVRASDISTPALETARKNAADLGARVEFAHGSWFDTDMPSERQWDIIVSNPPYIENGDKHLSQGDLRFEPQIALTDFSDGLSCIRTLAQGAPDRLAEGGFLLLEHGFDQGAAVRGVLAENGFSGVEILPDLAGLDRVTLGKYMKHLK</sequence>
<dbReference type="EC" id="2.1.1.297" evidence="1"/>
<dbReference type="EMBL" id="AE004969">
    <property type="protein sequence ID" value="AAW90623.2"/>
    <property type="molecule type" value="Genomic_DNA"/>
</dbReference>
<dbReference type="RefSeq" id="WP_010355833.1">
    <property type="nucleotide sequence ID" value="NC_002946.2"/>
</dbReference>
<dbReference type="SMR" id="Q5F5B4"/>
<dbReference type="STRING" id="242231.NGO_2015"/>
<dbReference type="KEGG" id="ngo:NGO_2015"/>
<dbReference type="PATRIC" id="fig|242231.10.peg.2430"/>
<dbReference type="HOGENOM" id="CLU_018398_3_0_4"/>
<dbReference type="Proteomes" id="UP000000535">
    <property type="component" value="Chromosome"/>
</dbReference>
<dbReference type="GO" id="GO:0003676">
    <property type="term" value="F:nucleic acid binding"/>
    <property type="evidence" value="ECO:0007669"/>
    <property type="project" value="InterPro"/>
</dbReference>
<dbReference type="GO" id="GO:0102559">
    <property type="term" value="F:protein-(glutamine-N5) methyltransferase activity"/>
    <property type="evidence" value="ECO:0007669"/>
    <property type="project" value="UniProtKB-EC"/>
</dbReference>
<dbReference type="GO" id="GO:0036009">
    <property type="term" value="F:protein-glutamine N-methyltransferase activity"/>
    <property type="evidence" value="ECO:0007669"/>
    <property type="project" value="UniProtKB-UniRule"/>
</dbReference>
<dbReference type="GO" id="GO:0032259">
    <property type="term" value="P:methylation"/>
    <property type="evidence" value="ECO:0007669"/>
    <property type="project" value="UniProtKB-KW"/>
</dbReference>
<dbReference type="CDD" id="cd02440">
    <property type="entry name" value="AdoMet_MTases"/>
    <property type="match status" value="1"/>
</dbReference>
<dbReference type="FunFam" id="3.40.50.150:FF:000053">
    <property type="entry name" value="Release factor glutamine methyltransferase"/>
    <property type="match status" value="1"/>
</dbReference>
<dbReference type="Gene3D" id="1.10.8.10">
    <property type="entry name" value="DNA helicase RuvA subunit, C-terminal domain"/>
    <property type="match status" value="1"/>
</dbReference>
<dbReference type="Gene3D" id="3.40.50.150">
    <property type="entry name" value="Vaccinia Virus protein VP39"/>
    <property type="match status" value="1"/>
</dbReference>
<dbReference type="HAMAP" id="MF_02126">
    <property type="entry name" value="RF_methyltr_PrmC"/>
    <property type="match status" value="1"/>
</dbReference>
<dbReference type="InterPro" id="IPR002052">
    <property type="entry name" value="DNA_methylase_N6_adenine_CS"/>
</dbReference>
<dbReference type="InterPro" id="IPR004556">
    <property type="entry name" value="HemK-like"/>
</dbReference>
<dbReference type="InterPro" id="IPR050320">
    <property type="entry name" value="N5-glutamine_MTase"/>
</dbReference>
<dbReference type="InterPro" id="IPR040758">
    <property type="entry name" value="PrmC_N"/>
</dbReference>
<dbReference type="InterPro" id="IPR019874">
    <property type="entry name" value="RF_methyltr_PrmC"/>
</dbReference>
<dbReference type="InterPro" id="IPR029063">
    <property type="entry name" value="SAM-dependent_MTases_sf"/>
</dbReference>
<dbReference type="InterPro" id="IPR007848">
    <property type="entry name" value="Small_mtfrase_dom"/>
</dbReference>
<dbReference type="NCBIfam" id="TIGR00536">
    <property type="entry name" value="hemK_fam"/>
    <property type="match status" value="1"/>
</dbReference>
<dbReference type="NCBIfam" id="TIGR03534">
    <property type="entry name" value="RF_mod_PrmC"/>
    <property type="match status" value="1"/>
</dbReference>
<dbReference type="PANTHER" id="PTHR18895">
    <property type="entry name" value="HEMK METHYLTRANSFERASE"/>
    <property type="match status" value="1"/>
</dbReference>
<dbReference type="PANTHER" id="PTHR18895:SF74">
    <property type="entry name" value="MTRF1L RELEASE FACTOR GLUTAMINE METHYLTRANSFERASE"/>
    <property type="match status" value="1"/>
</dbReference>
<dbReference type="Pfam" id="PF05175">
    <property type="entry name" value="MTS"/>
    <property type="match status" value="1"/>
</dbReference>
<dbReference type="Pfam" id="PF17827">
    <property type="entry name" value="PrmC_N"/>
    <property type="match status" value="1"/>
</dbReference>
<dbReference type="SUPFAM" id="SSF53335">
    <property type="entry name" value="S-adenosyl-L-methionine-dependent methyltransferases"/>
    <property type="match status" value="1"/>
</dbReference>
<comment type="function">
    <text evidence="1">Methylates the class 1 translation termination release factors RF1/PrfA and RF2/PrfB on the glutamine residue of the universally conserved GGQ motif.</text>
</comment>
<comment type="catalytic activity">
    <reaction evidence="1">
        <text>L-glutaminyl-[peptide chain release factor] + S-adenosyl-L-methionine = N(5)-methyl-L-glutaminyl-[peptide chain release factor] + S-adenosyl-L-homocysteine + H(+)</text>
        <dbReference type="Rhea" id="RHEA:42896"/>
        <dbReference type="Rhea" id="RHEA-COMP:10271"/>
        <dbReference type="Rhea" id="RHEA-COMP:10272"/>
        <dbReference type="ChEBI" id="CHEBI:15378"/>
        <dbReference type="ChEBI" id="CHEBI:30011"/>
        <dbReference type="ChEBI" id="CHEBI:57856"/>
        <dbReference type="ChEBI" id="CHEBI:59789"/>
        <dbReference type="ChEBI" id="CHEBI:61891"/>
        <dbReference type="EC" id="2.1.1.297"/>
    </reaction>
</comment>
<comment type="similarity">
    <text evidence="1">Belongs to the protein N5-glutamine methyltransferase family. PrmC subfamily.</text>
</comment>
<keyword id="KW-0489">Methyltransferase</keyword>
<keyword id="KW-1185">Reference proteome</keyword>
<keyword id="KW-0949">S-adenosyl-L-methionine</keyword>
<keyword id="KW-0808">Transferase</keyword>
<name>PRMC_NEIG1</name>
<organism>
    <name type="scientific">Neisseria gonorrhoeae (strain ATCC 700825 / FA 1090)</name>
    <dbReference type="NCBI Taxonomy" id="242231"/>
    <lineage>
        <taxon>Bacteria</taxon>
        <taxon>Pseudomonadati</taxon>
        <taxon>Pseudomonadota</taxon>
        <taxon>Betaproteobacteria</taxon>
        <taxon>Neisseriales</taxon>
        <taxon>Neisseriaceae</taxon>
        <taxon>Neisseria</taxon>
    </lineage>
</organism>
<accession>Q5F5B4</accession>
<protein>
    <recommendedName>
        <fullName evidence="1">Release factor glutamine methyltransferase</fullName>
        <shortName evidence="1">RF MTase</shortName>
        <ecNumber evidence="1">2.1.1.297</ecNumber>
    </recommendedName>
    <alternativeName>
        <fullName evidence="1">N5-glutamine methyltransferase PrmC</fullName>
    </alternativeName>
    <alternativeName>
        <fullName evidence="1">Protein-(glutamine-N5) MTase PrmC</fullName>
    </alternativeName>
    <alternativeName>
        <fullName evidence="1">Protein-glutamine N-methyltransferase PrmC</fullName>
    </alternativeName>
</protein>
<gene>
    <name evidence="1" type="primary">prmC</name>
    <name type="ordered locus">NGO_2015</name>
</gene>